<dbReference type="EC" id="2.7.8.13" evidence="1"/>
<dbReference type="EMBL" id="CP000512">
    <property type="protein sequence ID" value="ABM31416.1"/>
    <property type="molecule type" value="Genomic_DNA"/>
</dbReference>
<dbReference type="RefSeq" id="WP_011793976.1">
    <property type="nucleotide sequence ID" value="NC_008752.1"/>
</dbReference>
<dbReference type="SMR" id="A1TKC8"/>
<dbReference type="STRING" id="397945.Aave_0818"/>
<dbReference type="GeneID" id="79790474"/>
<dbReference type="KEGG" id="aav:Aave_0818"/>
<dbReference type="eggNOG" id="COG0472">
    <property type="taxonomic scope" value="Bacteria"/>
</dbReference>
<dbReference type="HOGENOM" id="CLU_023982_0_0_4"/>
<dbReference type="OrthoDB" id="9805475at2"/>
<dbReference type="UniPathway" id="UPA00219"/>
<dbReference type="Proteomes" id="UP000002596">
    <property type="component" value="Chromosome"/>
</dbReference>
<dbReference type="GO" id="GO:0005886">
    <property type="term" value="C:plasma membrane"/>
    <property type="evidence" value="ECO:0007669"/>
    <property type="project" value="UniProtKB-SubCell"/>
</dbReference>
<dbReference type="GO" id="GO:0046872">
    <property type="term" value="F:metal ion binding"/>
    <property type="evidence" value="ECO:0007669"/>
    <property type="project" value="UniProtKB-KW"/>
</dbReference>
<dbReference type="GO" id="GO:0008963">
    <property type="term" value="F:phospho-N-acetylmuramoyl-pentapeptide-transferase activity"/>
    <property type="evidence" value="ECO:0007669"/>
    <property type="project" value="UniProtKB-UniRule"/>
</dbReference>
<dbReference type="GO" id="GO:0051992">
    <property type="term" value="F:UDP-N-acetylmuramoyl-L-alanyl-D-glutamyl-meso-2,6-diaminopimelyl-D-alanyl-D-alanine:undecaprenyl-phosphate transferase activity"/>
    <property type="evidence" value="ECO:0007669"/>
    <property type="project" value="RHEA"/>
</dbReference>
<dbReference type="GO" id="GO:0051301">
    <property type="term" value="P:cell division"/>
    <property type="evidence" value="ECO:0007669"/>
    <property type="project" value="UniProtKB-KW"/>
</dbReference>
<dbReference type="GO" id="GO:0071555">
    <property type="term" value="P:cell wall organization"/>
    <property type="evidence" value="ECO:0007669"/>
    <property type="project" value="UniProtKB-KW"/>
</dbReference>
<dbReference type="GO" id="GO:0009252">
    <property type="term" value="P:peptidoglycan biosynthetic process"/>
    <property type="evidence" value="ECO:0007669"/>
    <property type="project" value="UniProtKB-UniRule"/>
</dbReference>
<dbReference type="GO" id="GO:0008360">
    <property type="term" value="P:regulation of cell shape"/>
    <property type="evidence" value="ECO:0007669"/>
    <property type="project" value="UniProtKB-KW"/>
</dbReference>
<dbReference type="CDD" id="cd06852">
    <property type="entry name" value="GT_MraY"/>
    <property type="match status" value="1"/>
</dbReference>
<dbReference type="HAMAP" id="MF_00038">
    <property type="entry name" value="MraY"/>
    <property type="match status" value="1"/>
</dbReference>
<dbReference type="InterPro" id="IPR000715">
    <property type="entry name" value="Glycosyl_transferase_4"/>
</dbReference>
<dbReference type="InterPro" id="IPR003524">
    <property type="entry name" value="PNAcMuramoyl-5peptid_Trfase"/>
</dbReference>
<dbReference type="InterPro" id="IPR018480">
    <property type="entry name" value="PNAcMuramoyl-5peptid_Trfase_CS"/>
</dbReference>
<dbReference type="NCBIfam" id="TIGR00445">
    <property type="entry name" value="mraY"/>
    <property type="match status" value="1"/>
</dbReference>
<dbReference type="PANTHER" id="PTHR22926">
    <property type="entry name" value="PHOSPHO-N-ACETYLMURAMOYL-PENTAPEPTIDE-TRANSFERASE"/>
    <property type="match status" value="1"/>
</dbReference>
<dbReference type="PANTHER" id="PTHR22926:SF5">
    <property type="entry name" value="PHOSPHO-N-ACETYLMURAMOYL-PENTAPEPTIDE-TRANSFERASE HOMOLOG"/>
    <property type="match status" value="1"/>
</dbReference>
<dbReference type="Pfam" id="PF00953">
    <property type="entry name" value="Glycos_transf_4"/>
    <property type="match status" value="1"/>
</dbReference>
<dbReference type="Pfam" id="PF10555">
    <property type="entry name" value="MraY_sig1"/>
    <property type="match status" value="1"/>
</dbReference>
<dbReference type="PROSITE" id="PS01347">
    <property type="entry name" value="MRAY_1"/>
    <property type="match status" value="1"/>
</dbReference>
<dbReference type="PROSITE" id="PS01348">
    <property type="entry name" value="MRAY_2"/>
    <property type="match status" value="1"/>
</dbReference>
<feature type="chain" id="PRO_1000002926" description="Phospho-N-acetylmuramoyl-pentapeptide-transferase">
    <location>
        <begin position="1"/>
        <end position="392"/>
    </location>
</feature>
<feature type="transmembrane region" description="Helical" evidence="1">
    <location>
        <begin position="24"/>
        <end position="44"/>
    </location>
</feature>
<feature type="transmembrane region" description="Helical" evidence="1">
    <location>
        <begin position="76"/>
        <end position="96"/>
    </location>
</feature>
<feature type="transmembrane region" description="Helical" evidence="1">
    <location>
        <begin position="100"/>
        <end position="120"/>
    </location>
</feature>
<feature type="transmembrane region" description="Helical" evidence="1">
    <location>
        <begin position="137"/>
        <end position="157"/>
    </location>
</feature>
<feature type="transmembrane region" description="Helical" evidence="1">
    <location>
        <begin position="193"/>
        <end position="213"/>
    </location>
</feature>
<feature type="transmembrane region" description="Helical" evidence="1">
    <location>
        <begin position="225"/>
        <end position="245"/>
    </location>
</feature>
<feature type="transmembrane region" description="Helical" evidence="1">
    <location>
        <begin position="262"/>
        <end position="282"/>
    </location>
</feature>
<feature type="transmembrane region" description="Helical" evidence="1">
    <location>
        <begin position="289"/>
        <end position="309"/>
    </location>
</feature>
<feature type="transmembrane region" description="Helical" evidence="1">
    <location>
        <begin position="314"/>
        <end position="334"/>
    </location>
</feature>
<feature type="transmembrane region" description="Helical" evidence="1">
    <location>
        <begin position="369"/>
        <end position="389"/>
    </location>
</feature>
<keyword id="KW-0131">Cell cycle</keyword>
<keyword id="KW-0132">Cell division</keyword>
<keyword id="KW-0997">Cell inner membrane</keyword>
<keyword id="KW-1003">Cell membrane</keyword>
<keyword id="KW-0133">Cell shape</keyword>
<keyword id="KW-0961">Cell wall biogenesis/degradation</keyword>
<keyword id="KW-0460">Magnesium</keyword>
<keyword id="KW-0472">Membrane</keyword>
<keyword id="KW-0479">Metal-binding</keyword>
<keyword id="KW-0573">Peptidoglycan synthesis</keyword>
<keyword id="KW-0808">Transferase</keyword>
<keyword id="KW-0812">Transmembrane</keyword>
<keyword id="KW-1133">Transmembrane helix</keyword>
<sequence length="392" mass="43149">MLLMLSQWLQGLSPEFGFFRVFQYLTFRAVMAAMTALLIGLLAGPKVIRMLTALKIGQPIRGYAMESHLSKSGTPTMGGVLILGAIAISTLLWFDLSNRFVWVVLAVTLGFGAIGWVDDWRKVVRKDPEGMRSREKYFWQSVIGIVAALYLVFCISENSNARVFELFVTWIQSGFSMDLPPQAGLLVPFFKEVSYPLGVLGFVILTYLVIVGSSNAVNLTDGLDGLAIMPVVMVGASLGVFAYVTGSAVYSKYLLFPYIAGAGELLIFCSAMAGAGLAFLWFNTHPAQVFMGDVGALALGGALGTIAIIVRQEIVLAIMGGIFVVEALSVMLQVTWFKYTKRRYGEGRRLLKMAPLHHHFEKSGWKETQVVVRFWIITMLLCLIGLTTLKLR</sequence>
<proteinExistence type="inferred from homology"/>
<accession>A1TKC8</accession>
<gene>
    <name evidence="1" type="primary">mraY</name>
    <name type="ordered locus">Aave_0818</name>
</gene>
<organism>
    <name type="scientific">Paracidovorax citrulli (strain AAC00-1)</name>
    <name type="common">Acidovorax citrulli</name>
    <dbReference type="NCBI Taxonomy" id="397945"/>
    <lineage>
        <taxon>Bacteria</taxon>
        <taxon>Pseudomonadati</taxon>
        <taxon>Pseudomonadota</taxon>
        <taxon>Betaproteobacteria</taxon>
        <taxon>Burkholderiales</taxon>
        <taxon>Comamonadaceae</taxon>
        <taxon>Paracidovorax</taxon>
    </lineage>
</organism>
<comment type="function">
    <text evidence="1">Catalyzes the initial step of the lipid cycle reactions in the biosynthesis of the cell wall peptidoglycan: transfers peptidoglycan precursor phospho-MurNAc-pentapeptide from UDP-MurNAc-pentapeptide onto the lipid carrier undecaprenyl phosphate, yielding undecaprenyl-pyrophosphoryl-MurNAc-pentapeptide, known as lipid I.</text>
</comment>
<comment type="catalytic activity">
    <reaction evidence="1">
        <text>UDP-N-acetyl-alpha-D-muramoyl-L-alanyl-gamma-D-glutamyl-meso-2,6-diaminopimeloyl-D-alanyl-D-alanine + di-trans,octa-cis-undecaprenyl phosphate = di-trans,octa-cis-undecaprenyl diphospho-N-acetyl-alpha-D-muramoyl-L-alanyl-D-glutamyl-meso-2,6-diaminopimeloyl-D-alanyl-D-alanine + UMP</text>
        <dbReference type="Rhea" id="RHEA:28386"/>
        <dbReference type="ChEBI" id="CHEBI:57865"/>
        <dbReference type="ChEBI" id="CHEBI:60392"/>
        <dbReference type="ChEBI" id="CHEBI:61386"/>
        <dbReference type="ChEBI" id="CHEBI:61387"/>
        <dbReference type="EC" id="2.7.8.13"/>
    </reaction>
</comment>
<comment type="cofactor">
    <cofactor evidence="1">
        <name>Mg(2+)</name>
        <dbReference type="ChEBI" id="CHEBI:18420"/>
    </cofactor>
</comment>
<comment type="pathway">
    <text evidence="1">Cell wall biogenesis; peptidoglycan biosynthesis.</text>
</comment>
<comment type="subcellular location">
    <subcellularLocation>
        <location evidence="1">Cell inner membrane</location>
        <topology evidence="1">Multi-pass membrane protein</topology>
    </subcellularLocation>
</comment>
<comment type="similarity">
    <text evidence="1">Belongs to the glycosyltransferase 4 family. MraY subfamily.</text>
</comment>
<evidence type="ECO:0000255" key="1">
    <source>
        <dbReference type="HAMAP-Rule" id="MF_00038"/>
    </source>
</evidence>
<protein>
    <recommendedName>
        <fullName evidence="1">Phospho-N-acetylmuramoyl-pentapeptide-transferase</fullName>
        <ecNumber evidence="1">2.7.8.13</ecNumber>
    </recommendedName>
    <alternativeName>
        <fullName evidence="1">UDP-MurNAc-pentapeptide phosphotransferase</fullName>
    </alternativeName>
</protein>
<name>MRAY_PARC0</name>
<reference key="1">
    <citation type="submission" date="2006-12" db="EMBL/GenBank/DDBJ databases">
        <title>Complete sequence of Acidovorax avenae subsp. citrulli AAC00-1.</title>
        <authorList>
            <person name="Copeland A."/>
            <person name="Lucas S."/>
            <person name="Lapidus A."/>
            <person name="Barry K."/>
            <person name="Detter J.C."/>
            <person name="Glavina del Rio T."/>
            <person name="Dalin E."/>
            <person name="Tice H."/>
            <person name="Pitluck S."/>
            <person name="Kiss H."/>
            <person name="Brettin T."/>
            <person name="Bruce D."/>
            <person name="Han C."/>
            <person name="Tapia R."/>
            <person name="Gilna P."/>
            <person name="Schmutz J."/>
            <person name="Larimer F."/>
            <person name="Land M."/>
            <person name="Hauser L."/>
            <person name="Kyrpides N."/>
            <person name="Kim E."/>
            <person name="Stahl D."/>
            <person name="Richardson P."/>
        </authorList>
    </citation>
    <scope>NUCLEOTIDE SEQUENCE [LARGE SCALE GENOMIC DNA]</scope>
    <source>
        <strain>AAC00-1</strain>
    </source>
</reference>